<reference key="1">
    <citation type="journal article" date="2004" name="Nucleic Acids Res.">
        <title>The genome sequence of Bacillus cereus ATCC 10987 reveals metabolic adaptations and a large plasmid related to Bacillus anthracis pXO1.</title>
        <authorList>
            <person name="Rasko D.A."/>
            <person name="Ravel J."/>
            <person name="Oekstad O.A."/>
            <person name="Helgason E."/>
            <person name="Cer R.Z."/>
            <person name="Jiang L."/>
            <person name="Shores K.A."/>
            <person name="Fouts D.E."/>
            <person name="Tourasse N.J."/>
            <person name="Angiuoli S.V."/>
            <person name="Kolonay J.F."/>
            <person name="Nelson W.C."/>
            <person name="Kolstoe A.-B."/>
            <person name="Fraser C.M."/>
            <person name="Read T.D."/>
        </authorList>
    </citation>
    <scope>NUCLEOTIDE SEQUENCE [LARGE SCALE GENOMIC DNA]</scope>
    <source>
        <strain>ATCC 10987 / NRS 248</strain>
    </source>
</reference>
<accession>Q730B3</accession>
<sequence length="350" mass="39387">MDINLFDFHLPEELIAQVPLEERETSRLMVLDRETGDIEHKHFTDILSYLHEGDCLVLNETKVMPARLHGVKEDTGAHIEVLLLKQEEGDKWETLVKPAKRVKEGTVISFGEGKLKATCTGTADQGGRQLEFSYDGIFYEILDELGEMPLPPYIKETLEDRDRYQTVYAKEIGSAAAPTAGLHFTEELLEKLKQKGVELAFITLHVGLGTFRPVSADTIEEHHMHAEYYHMSEETAALLNRVKENGGRIITVGTTSTRTLETIATDHDGKLCAASGWTDIFMYPGYEFKAIDGLITNFHLPKSTLIMLVSAFANRDNVLHAYNEAVKEKYRFFSFGDAMFVASHAKMGNK</sequence>
<feature type="chain" id="PRO_0000231313" description="S-adenosylmethionine:tRNA ribosyltransferase-isomerase">
    <location>
        <begin position="1"/>
        <end position="350"/>
    </location>
</feature>
<gene>
    <name evidence="1" type="primary">queA</name>
    <name type="ordered locus">BCE_4503</name>
</gene>
<dbReference type="EC" id="2.4.99.17" evidence="1"/>
<dbReference type="EMBL" id="AE017194">
    <property type="protein sequence ID" value="AAS43404.1"/>
    <property type="molecule type" value="Genomic_DNA"/>
</dbReference>
<dbReference type="SMR" id="Q730B3"/>
<dbReference type="KEGG" id="bca:BCE_4503"/>
<dbReference type="HOGENOM" id="CLU_039110_1_0_9"/>
<dbReference type="UniPathway" id="UPA00392"/>
<dbReference type="Proteomes" id="UP000002527">
    <property type="component" value="Chromosome"/>
</dbReference>
<dbReference type="GO" id="GO:0005737">
    <property type="term" value="C:cytoplasm"/>
    <property type="evidence" value="ECO:0007669"/>
    <property type="project" value="UniProtKB-SubCell"/>
</dbReference>
<dbReference type="GO" id="GO:0051075">
    <property type="term" value="F:S-adenosylmethionine:tRNA ribosyltransferase-isomerase activity"/>
    <property type="evidence" value="ECO:0007669"/>
    <property type="project" value="UniProtKB-EC"/>
</dbReference>
<dbReference type="GO" id="GO:0008616">
    <property type="term" value="P:queuosine biosynthetic process"/>
    <property type="evidence" value="ECO:0007669"/>
    <property type="project" value="UniProtKB-UniRule"/>
</dbReference>
<dbReference type="GO" id="GO:0002099">
    <property type="term" value="P:tRNA wobble guanine modification"/>
    <property type="evidence" value="ECO:0007669"/>
    <property type="project" value="TreeGrafter"/>
</dbReference>
<dbReference type="FunFam" id="2.40.10.240:FF:000002">
    <property type="entry name" value="S-adenosylmethionine:tRNA ribosyltransferase-isomerase"/>
    <property type="match status" value="1"/>
</dbReference>
<dbReference type="FunFam" id="3.40.1780.10:FF:000001">
    <property type="entry name" value="S-adenosylmethionine:tRNA ribosyltransferase-isomerase"/>
    <property type="match status" value="1"/>
</dbReference>
<dbReference type="Gene3D" id="2.40.10.240">
    <property type="entry name" value="QueA-like"/>
    <property type="match status" value="1"/>
</dbReference>
<dbReference type="Gene3D" id="3.40.1780.10">
    <property type="entry name" value="QueA-like"/>
    <property type="match status" value="1"/>
</dbReference>
<dbReference type="HAMAP" id="MF_00113">
    <property type="entry name" value="QueA"/>
    <property type="match status" value="1"/>
</dbReference>
<dbReference type="InterPro" id="IPR003699">
    <property type="entry name" value="QueA"/>
</dbReference>
<dbReference type="InterPro" id="IPR042118">
    <property type="entry name" value="QueA_dom1"/>
</dbReference>
<dbReference type="InterPro" id="IPR042119">
    <property type="entry name" value="QueA_dom2"/>
</dbReference>
<dbReference type="InterPro" id="IPR036100">
    <property type="entry name" value="QueA_sf"/>
</dbReference>
<dbReference type="NCBIfam" id="NF001140">
    <property type="entry name" value="PRK00147.1"/>
    <property type="match status" value="1"/>
</dbReference>
<dbReference type="NCBIfam" id="TIGR00113">
    <property type="entry name" value="queA"/>
    <property type="match status" value="1"/>
</dbReference>
<dbReference type="PANTHER" id="PTHR30307">
    <property type="entry name" value="S-ADENOSYLMETHIONINE:TRNA RIBOSYLTRANSFERASE-ISOMERASE"/>
    <property type="match status" value="1"/>
</dbReference>
<dbReference type="PANTHER" id="PTHR30307:SF0">
    <property type="entry name" value="S-ADENOSYLMETHIONINE:TRNA RIBOSYLTRANSFERASE-ISOMERASE"/>
    <property type="match status" value="1"/>
</dbReference>
<dbReference type="Pfam" id="PF02547">
    <property type="entry name" value="Queuosine_synth"/>
    <property type="match status" value="1"/>
</dbReference>
<dbReference type="SUPFAM" id="SSF111337">
    <property type="entry name" value="QueA-like"/>
    <property type="match status" value="1"/>
</dbReference>
<protein>
    <recommendedName>
        <fullName evidence="1">S-adenosylmethionine:tRNA ribosyltransferase-isomerase</fullName>
        <ecNumber evidence="1">2.4.99.17</ecNumber>
    </recommendedName>
    <alternativeName>
        <fullName evidence="1">Queuosine biosynthesis protein QueA</fullName>
    </alternativeName>
</protein>
<keyword id="KW-0963">Cytoplasm</keyword>
<keyword id="KW-0671">Queuosine biosynthesis</keyword>
<keyword id="KW-0949">S-adenosyl-L-methionine</keyword>
<keyword id="KW-0808">Transferase</keyword>
<organism>
    <name type="scientific">Bacillus cereus (strain ATCC 10987 / NRS 248)</name>
    <dbReference type="NCBI Taxonomy" id="222523"/>
    <lineage>
        <taxon>Bacteria</taxon>
        <taxon>Bacillati</taxon>
        <taxon>Bacillota</taxon>
        <taxon>Bacilli</taxon>
        <taxon>Bacillales</taxon>
        <taxon>Bacillaceae</taxon>
        <taxon>Bacillus</taxon>
        <taxon>Bacillus cereus group</taxon>
    </lineage>
</organism>
<proteinExistence type="inferred from homology"/>
<comment type="function">
    <text evidence="1">Transfers and isomerizes the ribose moiety from AdoMet to the 7-aminomethyl group of 7-deazaguanine (preQ1-tRNA) to give epoxyqueuosine (oQ-tRNA).</text>
</comment>
<comment type="catalytic activity">
    <reaction evidence="1">
        <text>7-aminomethyl-7-carbaguanosine(34) in tRNA + S-adenosyl-L-methionine = epoxyqueuosine(34) in tRNA + adenine + L-methionine + 2 H(+)</text>
        <dbReference type="Rhea" id="RHEA:32155"/>
        <dbReference type="Rhea" id="RHEA-COMP:10342"/>
        <dbReference type="Rhea" id="RHEA-COMP:18582"/>
        <dbReference type="ChEBI" id="CHEBI:15378"/>
        <dbReference type="ChEBI" id="CHEBI:16708"/>
        <dbReference type="ChEBI" id="CHEBI:57844"/>
        <dbReference type="ChEBI" id="CHEBI:59789"/>
        <dbReference type="ChEBI" id="CHEBI:82833"/>
        <dbReference type="ChEBI" id="CHEBI:194443"/>
        <dbReference type="EC" id="2.4.99.17"/>
    </reaction>
</comment>
<comment type="pathway">
    <text evidence="1">tRNA modification; tRNA-queuosine biosynthesis.</text>
</comment>
<comment type="subunit">
    <text evidence="1">Monomer.</text>
</comment>
<comment type="subcellular location">
    <subcellularLocation>
        <location evidence="1">Cytoplasm</location>
    </subcellularLocation>
</comment>
<comment type="similarity">
    <text evidence="1">Belongs to the QueA family.</text>
</comment>
<evidence type="ECO:0000255" key="1">
    <source>
        <dbReference type="HAMAP-Rule" id="MF_00113"/>
    </source>
</evidence>
<name>QUEA_BACC1</name>